<protein>
    <recommendedName>
        <fullName>Endoplasmic reticulum-Golgi intermediate compartment protein 3</fullName>
    </recommendedName>
</protein>
<reference key="1">
    <citation type="submission" date="2004-11" db="EMBL/GenBank/DDBJ databases">
        <authorList>
            <consortium name="The German cDNA consortium"/>
        </authorList>
    </citation>
    <scope>NUCLEOTIDE SEQUENCE [LARGE SCALE MRNA]</scope>
    <source>
        <tissue>Heart</tissue>
    </source>
</reference>
<sequence>MEALGKLKQFDAYPKTLEDFRVKTCGGATVTIVSGLLMLLLFLSELQYYLTTEVHPELYVDKSRGDKLKINIDVLFPHMPCAYLSIDAMDVAGEQQLDVEHNLFKQRLDKDGIPVSSEAERHELGKVEVTVFDPDSLDPDRCESCYGAEAEDIKCCNTCEDVRETYRRRGWAFKNPDTIEQCRREGFSQKMQEQKNEGCQVYGFLEVNKVAGNFHFAPGKSFQQSHVHVHDLQSFGLDNINMTHYIQHLSFGEDYPGIVNPLDHTNVTAPQASMMFQYFVKVVPTVYMKVDGEVLRTNQFSVTRHEKVANGLLGDQGLPGVFVLYELSPMMVKLTEKHRSFTHFLTGVCAIIGGMFTVAGLIDSLIYHSARAIQKKIDLGKTT</sequence>
<name>ERGI3_PONAB</name>
<accession>Q5R8G3</accession>
<feature type="chain" id="PRO_0000239389" description="Endoplasmic reticulum-Golgi intermediate compartment protein 3">
    <location>
        <begin position="1"/>
        <end position="383"/>
    </location>
</feature>
<feature type="topological domain" description="Cytoplasmic" evidence="3">
    <location>
        <begin position="1"/>
        <end position="25"/>
    </location>
</feature>
<feature type="transmembrane region" description="Helical" evidence="3">
    <location>
        <begin position="26"/>
        <end position="46"/>
    </location>
</feature>
<feature type="topological domain" description="Lumenal" evidence="3">
    <location>
        <begin position="47"/>
        <end position="341"/>
    </location>
</feature>
<feature type="transmembrane region" description="Helical" evidence="3">
    <location>
        <begin position="342"/>
        <end position="362"/>
    </location>
</feature>
<feature type="topological domain" description="Cytoplasmic" evidence="3">
    <location>
        <begin position="363"/>
        <end position="383"/>
    </location>
</feature>
<feature type="region of interest" description="Required for MARCHF2-mediated degradation" evidence="2">
    <location>
        <begin position="1"/>
        <end position="25"/>
    </location>
</feature>
<feature type="site" description="Ubiquitinated; by MARCHF2" evidence="2">
    <location>
        <position position="8"/>
    </location>
</feature>
<feature type="modified residue" description="N-acetylmethionine" evidence="2">
    <location>
        <position position="1"/>
    </location>
</feature>
<feature type="modified residue" description="Phosphoserine" evidence="2">
    <location>
        <position position="116"/>
    </location>
</feature>
<feature type="glycosylation site" description="N-linked (GlcNAc...) asparagine" evidence="3">
    <location>
        <position position="266"/>
    </location>
</feature>
<comment type="function">
    <text evidence="2">Possible role in transport between endoplasmic reticulum and Golgi. Positively regulates trafficking of the secretory proteins alpha1-antitrypsin/SERPINA1 and HP/haptoglobin (By similarity).</text>
</comment>
<comment type="subunit">
    <text evidence="2">Forms homodimers (By similarity). May form a heteromeric complex composed of ERGIC1, ERGIC2 and ERGIC3 (By similarity). Within the complex, the interaction with ERGIC1 is direct (By similarity). Interacts with ERGIC1/ERGIC32 (By similarity). Interacts with ERGIC2, the interaction is required for the stable expression of both proteins (By similarity). Interacts with MARCHF2 (By similarity). Interacts with SERPINA1/alpha1-antitrypsin and HP/haptoglobin (By similarity).</text>
</comment>
<comment type="subcellular location">
    <subcellularLocation>
        <location evidence="1">Endoplasmic reticulum-Golgi intermediate compartment membrane</location>
        <topology evidence="1">Multi-pass membrane protein</topology>
    </subcellularLocation>
    <subcellularLocation>
        <location evidence="1">Golgi apparatus</location>
        <location evidence="1">cis-Golgi network membrane</location>
        <topology evidence="1">Multi-pass membrane protein</topology>
    </subcellularLocation>
    <subcellularLocation>
        <location evidence="1">Endoplasmic reticulum membrane</location>
        <topology evidence="1">Multi-pass membrane protein</topology>
    </subcellularLocation>
    <text evidence="1">Cycles between the endoplasmic reticulum and the Golgi.</text>
</comment>
<comment type="similarity">
    <text evidence="4">Belongs to the ERGIC family.</text>
</comment>
<keyword id="KW-0007">Acetylation</keyword>
<keyword id="KW-0256">Endoplasmic reticulum</keyword>
<keyword id="KW-0931">ER-Golgi transport</keyword>
<keyword id="KW-0325">Glycoprotein</keyword>
<keyword id="KW-0333">Golgi apparatus</keyword>
<keyword id="KW-0472">Membrane</keyword>
<keyword id="KW-0597">Phosphoprotein</keyword>
<keyword id="KW-1185">Reference proteome</keyword>
<keyword id="KW-0812">Transmembrane</keyword>
<keyword id="KW-1133">Transmembrane helix</keyword>
<keyword id="KW-0813">Transport</keyword>
<evidence type="ECO:0000250" key="1"/>
<evidence type="ECO:0000250" key="2">
    <source>
        <dbReference type="UniProtKB" id="Q9Y282"/>
    </source>
</evidence>
<evidence type="ECO:0000255" key="3"/>
<evidence type="ECO:0000305" key="4"/>
<organism>
    <name type="scientific">Pongo abelii</name>
    <name type="common">Sumatran orangutan</name>
    <name type="synonym">Pongo pygmaeus abelii</name>
    <dbReference type="NCBI Taxonomy" id="9601"/>
    <lineage>
        <taxon>Eukaryota</taxon>
        <taxon>Metazoa</taxon>
        <taxon>Chordata</taxon>
        <taxon>Craniata</taxon>
        <taxon>Vertebrata</taxon>
        <taxon>Euteleostomi</taxon>
        <taxon>Mammalia</taxon>
        <taxon>Eutheria</taxon>
        <taxon>Euarchontoglires</taxon>
        <taxon>Primates</taxon>
        <taxon>Haplorrhini</taxon>
        <taxon>Catarrhini</taxon>
        <taxon>Hominidae</taxon>
        <taxon>Pongo</taxon>
    </lineage>
</organism>
<dbReference type="EMBL" id="CR859789">
    <property type="protein sequence ID" value="CAH91947.1"/>
    <property type="molecule type" value="mRNA"/>
</dbReference>
<dbReference type="RefSeq" id="NP_001126130.1">
    <property type="nucleotide sequence ID" value="NM_001132658.1"/>
</dbReference>
<dbReference type="SMR" id="Q5R8G3"/>
<dbReference type="FunCoup" id="Q5R8G3">
    <property type="interactions" value="1881"/>
</dbReference>
<dbReference type="STRING" id="9601.ENSPPYP00000012233"/>
<dbReference type="GlyCosmos" id="Q5R8G3">
    <property type="glycosylation" value="1 site, No reported glycans"/>
</dbReference>
<dbReference type="GeneID" id="100173087"/>
<dbReference type="KEGG" id="pon:100173087"/>
<dbReference type="CTD" id="51614"/>
<dbReference type="eggNOG" id="KOG2667">
    <property type="taxonomic scope" value="Eukaryota"/>
</dbReference>
<dbReference type="InParanoid" id="Q5R8G3"/>
<dbReference type="OrthoDB" id="270930at2759"/>
<dbReference type="Proteomes" id="UP000001595">
    <property type="component" value="Unplaced"/>
</dbReference>
<dbReference type="GO" id="GO:0030134">
    <property type="term" value="C:COPII-coated ER to Golgi transport vesicle"/>
    <property type="evidence" value="ECO:0007669"/>
    <property type="project" value="TreeGrafter"/>
</dbReference>
<dbReference type="GO" id="GO:0005789">
    <property type="term" value="C:endoplasmic reticulum membrane"/>
    <property type="evidence" value="ECO:0007669"/>
    <property type="project" value="UniProtKB-SubCell"/>
</dbReference>
<dbReference type="GO" id="GO:0033116">
    <property type="term" value="C:endoplasmic reticulum-Golgi intermediate compartment membrane"/>
    <property type="evidence" value="ECO:0007669"/>
    <property type="project" value="UniProtKB-SubCell"/>
</dbReference>
<dbReference type="GO" id="GO:0000139">
    <property type="term" value="C:Golgi membrane"/>
    <property type="evidence" value="ECO:0007669"/>
    <property type="project" value="TreeGrafter"/>
</dbReference>
<dbReference type="GO" id="GO:0006888">
    <property type="term" value="P:endoplasmic reticulum to Golgi vesicle-mediated transport"/>
    <property type="evidence" value="ECO:0007669"/>
    <property type="project" value="TreeGrafter"/>
</dbReference>
<dbReference type="GO" id="GO:0006890">
    <property type="term" value="P:retrograde vesicle-mediated transport, Golgi to endoplasmic reticulum"/>
    <property type="evidence" value="ECO:0007669"/>
    <property type="project" value="TreeGrafter"/>
</dbReference>
<dbReference type="InterPro" id="IPR045888">
    <property type="entry name" value="Erv"/>
</dbReference>
<dbReference type="InterPro" id="IPR012936">
    <property type="entry name" value="Erv_C"/>
</dbReference>
<dbReference type="InterPro" id="IPR039542">
    <property type="entry name" value="Erv_N"/>
</dbReference>
<dbReference type="PANTHER" id="PTHR10984">
    <property type="entry name" value="ENDOPLASMIC RETICULUM-GOLGI INTERMEDIATE COMPARTMENT PROTEIN"/>
    <property type="match status" value="1"/>
</dbReference>
<dbReference type="PANTHER" id="PTHR10984:SF25">
    <property type="entry name" value="ENDOPLASMIC RETICULUM-GOLGI INTERMEDIATE COMPARTMENT PROTEIN 3"/>
    <property type="match status" value="1"/>
</dbReference>
<dbReference type="Pfam" id="PF07970">
    <property type="entry name" value="COPIIcoated_ERV"/>
    <property type="match status" value="1"/>
</dbReference>
<dbReference type="Pfam" id="PF13850">
    <property type="entry name" value="ERGIC_N"/>
    <property type="match status" value="1"/>
</dbReference>
<gene>
    <name type="primary">ERGIC3</name>
</gene>
<proteinExistence type="evidence at transcript level"/>